<dbReference type="EMBL" id="AE005672">
    <property type="protein sequence ID" value="AAK74708.1"/>
    <property type="molecule type" value="Genomic_DNA"/>
</dbReference>
<dbReference type="PIR" id="C95064">
    <property type="entry name" value="C95064"/>
</dbReference>
<dbReference type="RefSeq" id="WP_001808691.1">
    <property type="nucleotide sequence ID" value="NZ_CP155539.1"/>
</dbReference>
<dbReference type="PDB" id="1IB8">
    <property type="method" value="NMR"/>
    <property type="chains" value="A=2-159"/>
</dbReference>
<dbReference type="PDBsum" id="1IB8"/>
<dbReference type="SMR" id="Q97S61"/>
<dbReference type="PaxDb" id="170187-SP_0552"/>
<dbReference type="EnsemblBacteria" id="AAK74708">
    <property type="protein sequence ID" value="AAK74708"/>
    <property type="gene ID" value="SP_0552"/>
</dbReference>
<dbReference type="GeneID" id="93738453"/>
<dbReference type="KEGG" id="spn:SP_0552"/>
<dbReference type="eggNOG" id="COG0779">
    <property type="taxonomic scope" value="Bacteria"/>
</dbReference>
<dbReference type="PhylomeDB" id="Q97S61"/>
<dbReference type="BioCyc" id="SPNE170187:G1FZB-572-MONOMER"/>
<dbReference type="EvolutionaryTrace" id="Q97S61"/>
<dbReference type="Proteomes" id="UP000000585">
    <property type="component" value="Chromosome"/>
</dbReference>
<dbReference type="GO" id="GO:0005829">
    <property type="term" value="C:cytosol"/>
    <property type="evidence" value="ECO:0007669"/>
    <property type="project" value="TreeGrafter"/>
</dbReference>
<dbReference type="GO" id="GO:0000028">
    <property type="term" value="P:ribosomal small subunit assembly"/>
    <property type="evidence" value="ECO:0007669"/>
    <property type="project" value="TreeGrafter"/>
</dbReference>
<dbReference type="GO" id="GO:0006412">
    <property type="term" value="P:translation"/>
    <property type="evidence" value="ECO:0007669"/>
    <property type="project" value="TreeGrafter"/>
</dbReference>
<dbReference type="CDD" id="cd01734">
    <property type="entry name" value="YlxS_C"/>
    <property type="match status" value="1"/>
</dbReference>
<dbReference type="Gene3D" id="2.30.30.180">
    <property type="entry name" value="Ribosome maturation factor RimP, C-terminal domain"/>
    <property type="match status" value="1"/>
</dbReference>
<dbReference type="Gene3D" id="3.30.300.70">
    <property type="entry name" value="RimP-like superfamily, N-terminal"/>
    <property type="match status" value="1"/>
</dbReference>
<dbReference type="HAMAP" id="MF_01077">
    <property type="entry name" value="RimP"/>
    <property type="match status" value="1"/>
</dbReference>
<dbReference type="InterPro" id="IPR003728">
    <property type="entry name" value="Ribosome_maturation_RimP"/>
</dbReference>
<dbReference type="InterPro" id="IPR028998">
    <property type="entry name" value="RimP_C"/>
</dbReference>
<dbReference type="InterPro" id="IPR036847">
    <property type="entry name" value="RimP_C_sf"/>
</dbReference>
<dbReference type="InterPro" id="IPR028989">
    <property type="entry name" value="RimP_N"/>
</dbReference>
<dbReference type="InterPro" id="IPR035956">
    <property type="entry name" value="RimP_N_sf"/>
</dbReference>
<dbReference type="NCBIfam" id="NF000928">
    <property type="entry name" value="PRK00092.1-2"/>
    <property type="match status" value="1"/>
</dbReference>
<dbReference type="PANTHER" id="PTHR33867">
    <property type="entry name" value="RIBOSOME MATURATION FACTOR RIMP"/>
    <property type="match status" value="1"/>
</dbReference>
<dbReference type="PANTHER" id="PTHR33867:SF1">
    <property type="entry name" value="RIBOSOME MATURATION FACTOR RIMP"/>
    <property type="match status" value="1"/>
</dbReference>
<dbReference type="Pfam" id="PF17384">
    <property type="entry name" value="DUF150_C"/>
    <property type="match status" value="1"/>
</dbReference>
<dbReference type="Pfam" id="PF02576">
    <property type="entry name" value="RimP_N"/>
    <property type="match status" value="1"/>
</dbReference>
<dbReference type="SUPFAM" id="SSF74942">
    <property type="entry name" value="YhbC-like, C-terminal domain"/>
    <property type="match status" value="1"/>
</dbReference>
<dbReference type="SUPFAM" id="SSF75420">
    <property type="entry name" value="YhbC-like, N-terminal domain"/>
    <property type="match status" value="1"/>
</dbReference>
<name>RIMP_STRPN</name>
<gene>
    <name evidence="1" type="primary">rimP</name>
    <name type="ordered locus">SP_0552</name>
</gene>
<feature type="chain" id="PRO_0000181934" description="Ribosome maturation factor RimP">
    <location>
        <begin position="1"/>
        <end position="159"/>
    </location>
</feature>
<feature type="helix" evidence="2">
    <location>
        <begin position="3"/>
        <end position="19"/>
    </location>
</feature>
<feature type="strand" evidence="2">
    <location>
        <begin position="21"/>
        <end position="33"/>
    </location>
</feature>
<feature type="strand" evidence="2">
    <location>
        <begin position="36"/>
        <end position="44"/>
    </location>
</feature>
<feature type="helix" evidence="2">
    <location>
        <begin position="51"/>
        <end position="61"/>
    </location>
</feature>
<feature type="helix" evidence="2">
    <location>
        <begin position="62"/>
        <end position="64"/>
    </location>
</feature>
<feature type="turn" evidence="2">
    <location>
        <begin position="65"/>
        <end position="67"/>
    </location>
</feature>
<feature type="strand" evidence="2">
    <location>
        <begin position="77"/>
        <end position="82"/>
    </location>
</feature>
<feature type="strand" evidence="2">
    <location>
        <begin position="85"/>
        <end position="88"/>
    </location>
</feature>
<feature type="helix" evidence="2">
    <location>
        <begin position="93"/>
        <end position="99"/>
    </location>
</feature>
<feature type="strand" evidence="2">
    <location>
        <begin position="101"/>
        <end position="107"/>
    </location>
</feature>
<feature type="strand" evidence="2">
    <location>
        <begin position="112"/>
        <end position="114"/>
    </location>
</feature>
<feature type="strand" evidence="2">
    <location>
        <begin position="116"/>
        <end position="126"/>
    </location>
</feature>
<feature type="strand" evidence="2">
    <location>
        <begin position="129"/>
        <end position="135"/>
    </location>
</feature>
<feature type="strand" evidence="2">
    <location>
        <begin position="140"/>
        <end position="145"/>
    </location>
</feature>
<feature type="strand" evidence="2">
    <location>
        <begin position="154"/>
        <end position="156"/>
    </location>
</feature>
<accession>Q97S61</accession>
<sequence length="159" mass="17746">MDAIATIVELVREVVEPVIEAPFELVDIEYGKIGSDMILSIFVDKPEGITLNDTADLTEIISPVLDTIKPDPFPEQYFLEITSPGLERPLKTKDAVAGAVGKYIHVGLYQAIDKQKVFEGTLLAFEEDELTMEYMDKTRKKTVQIPYSLVSKARLAVKL</sequence>
<reference key="1">
    <citation type="journal article" date="2001" name="Science">
        <title>Complete genome sequence of a virulent isolate of Streptococcus pneumoniae.</title>
        <authorList>
            <person name="Tettelin H."/>
            <person name="Nelson K.E."/>
            <person name="Paulsen I.T."/>
            <person name="Eisen J.A."/>
            <person name="Read T.D."/>
            <person name="Peterson S.N."/>
            <person name="Heidelberg J.F."/>
            <person name="DeBoy R.T."/>
            <person name="Haft D.H."/>
            <person name="Dodson R.J."/>
            <person name="Durkin A.S."/>
            <person name="Gwinn M.L."/>
            <person name="Kolonay J.F."/>
            <person name="Nelson W.C."/>
            <person name="Peterson J.D."/>
            <person name="Umayam L.A."/>
            <person name="White O."/>
            <person name="Salzberg S.L."/>
            <person name="Lewis M.R."/>
            <person name="Radune D."/>
            <person name="Holtzapple E.K."/>
            <person name="Khouri H.M."/>
            <person name="Wolf A.M."/>
            <person name="Utterback T.R."/>
            <person name="Hansen C.L."/>
            <person name="McDonald L.A."/>
            <person name="Feldblyum T.V."/>
            <person name="Angiuoli S.V."/>
            <person name="Dickinson T."/>
            <person name="Hickey E.K."/>
            <person name="Holt I.E."/>
            <person name="Loftus B.J."/>
            <person name="Yang F."/>
            <person name="Smith H.O."/>
            <person name="Venter J.C."/>
            <person name="Dougherty B.A."/>
            <person name="Morrison D.A."/>
            <person name="Hollingshead S.K."/>
            <person name="Fraser C.M."/>
        </authorList>
    </citation>
    <scope>NUCLEOTIDE SEQUENCE [LARGE SCALE GENOMIC DNA]</scope>
    <source>
        <strain>ATCC BAA-334 / TIGR4</strain>
    </source>
</reference>
<reference key="2">
    <citation type="journal article" date="2001" name="J. Mol. Biol.">
        <title>Solution structure and function of a conserved protein SP14.3 encoded by an essential Streptococcus pneumoniae gene.</title>
        <authorList>
            <person name="Yu L."/>
            <person name="Gunasekera A.H."/>
            <person name="Mack J."/>
            <person name="Olejniczak E.T."/>
            <person name="Chovan L.E."/>
            <person name="Ruan X."/>
            <person name="Towne D.L."/>
            <person name="Lerner C.G."/>
            <person name="Fesik S.W."/>
        </authorList>
    </citation>
    <scope>STRUCTURE BY NMR</scope>
</reference>
<comment type="function">
    <text evidence="1">Required for maturation of 30S ribosomal subunits.</text>
</comment>
<comment type="subcellular location">
    <subcellularLocation>
        <location evidence="1">Cytoplasm</location>
    </subcellularLocation>
</comment>
<comment type="similarity">
    <text evidence="1">Belongs to the RimP family.</text>
</comment>
<keyword id="KW-0002">3D-structure</keyword>
<keyword id="KW-0963">Cytoplasm</keyword>
<keyword id="KW-1185">Reference proteome</keyword>
<keyword id="KW-0690">Ribosome biogenesis</keyword>
<protein>
    <recommendedName>
        <fullName evidence="1">Ribosome maturation factor RimP</fullName>
    </recommendedName>
    <alternativeName>
        <fullName>SP14.3</fullName>
    </alternativeName>
</protein>
<proteinExistence type="evidence at protein level"/>
<evidence type="ECO:0000255" key="1">
    <source>
        <dbReference type="HAMAP-Rule" id="MF_01077"/>
    </source>
</evidence>
<evidence type="ECO:0007829" key="2">
    <source>
        <dbReference type="PDB" id="1IB8"/>
    </source>
</evidence>
<organism>
    <name type="scientific">Streptococcus pneumoniae serotype 4 (strain ATCC BAA-334 / TIGR4)</name>
    <dbReference type="NCBI Taxonomy" id="170187"/>
    <lineage>
        <taxon>Bacteria</taxon>
        <taxon>Bacillati</taxon>
        <taxon>Bacillota</taxon>
        <taxon>Bacilli</taxon>
        <taxon>Lactobacillales</taxon>
        <taxon>Streptococcaceae</taxon>
        <taxon>Streptococcus</taxon>
    </lineage>
</organism>